<organism>
    <name type="scientific">Aspergillus fumigatus (strain ATCC MYA-4609 / CBS 101355 / FGSC A1100 / Af293)</name>
    <name type="common">Neosartorya fumigata</name>
    <dbReference type="NCBI Taxonomy" id="330879"/>
    <lineage>
        <taxon>Eukaryota</taxon>
        <taxon>Fungi</taxon>
        <taxon>Dikarya</taxon>
        <taxon>Ascomycota</taxon>
        <taxon>Pezizomycotina</taxon>
        <taxon>Eurotiomycetes</taxon>
        <taxon>Eurotiomycetidae</taxon>
        <taxon>Eurotiales</taxon>
        <taxon>Aspergillaceae</taxon>
        <taxon>Aspergillus</taxon>
        <taxon>Aspergillus subgen. Fumigati</taxon>
    </lineage>
</organism>
<accession>Q4WJT9</accession>
<evidence type="ECO:0000250" key="1"/>
<evidence type="ECO:0000305" key="2"/>
<reference key="1">
    <citation type="journal article" date="2005" name="Nature">
        <title>Genomic sequence of the pathogenic and allergenic filamentous fungus Aspergillus fumigatus.</title>
        <authorList>
            <person name="Nierman W.C."/>
            <person name="Pain A."/>
            <person name="Anderson M.J."/>
            <person name="Wortman J.R."/>
            <person name="Kim H.S."/>
            <person name="Arroyo J."/>
            <person name="Berriman M."/>
            <person name="Abe K."/>
            <person name="Archer D.B."/>
            <person name="Bermejo C."/>
            <person name="Bennett J.W."/>
            <person name="Bowyer P."/>
            <person name="Chen D."/>
            <person name="Collins M."/>
            <person name="Coulsen R."/>
            <person name="Davies R."/>
            <person name="Dyer P.S."/>
            <person name="Farman M.L."/>
            <person name="Fedorova N."/>
            <person name="Fedorova N.D."/>
            <person name="Feldblyum T.V."/>
            <person name="Fischer R."/>
            <person name="Fosker N."/>
            <person name="Fraser A."/>
            <person name="Garcia J.L."/>
            <person name="Garcia M.J."/>
            <person name="Goble A."/>
            <person name="Goldman G.H."/>
            <person name="Gomi K."/>
            <person name="Griffith-Jones S."/>
            <person name="Gwilliam R."/>
            <person name="Haas B.J."/>
            <person name="Haas H."/>
            <person name="Harris D.E."/>
            <person name="Horiuchi H."/>
            <person name="Huang J."/>
            <person name="Humphray S."/>
            <person name="Jimenez J."/>
            <person name="Keller N."/>
            <person name="Khouri H."/>
            <person name="Kitamoto K."/>
            <person name="Kobayashi T."/>
            <person name="Konzack S."/>
            <person name="Kulkarni R."/>
            <person name="Kumagai T."/>
            <person name="Lafton A."/>
            <person name="Latge J.-P."/>
            <person name="Li W."/>
            <person name="Lord A."/>
            <person name="Lu C."/>
            <person name="Majoros W.H."/>
            <person name="May G.S."/>
            <person name="Miller B.L."/>
            <person name="Mohamoud Y."/>
            <person name="Molina M."/>
            <person name="Monod M."/>
            <person name="Mouyna I."/>
            <person name="Mulligan S."/>
            <person name="Murphy L.D."/>
            <person name="O'Neil S."/>
            <person name="Paulsen I."/>
            <person name="Penalva M.A."/>
            <person name="Pertea M."/>
            <person name="Price C."/>
            <person name="Pritchard B.L."/>
            <person name="Quail M.A."/>
            <person name="Rabbinowitsch E."/>
            <person name="Rawlins N."/>
            <person name="Rajandream M.A."/>
            <person name="Reichard U."/>
            <person name="Renauld H."/>
            <person name="Robson G.D."/>
            <person name="Rodriguez de Cordoba S."/>
            <person name="Rodriguez-Pena J.M."/>
            <person name="Ronning C.M."/>
            <person name="Rutter S."/>
            <person name="Salzberg S.L."/>
            <person name="Sanchez M."/>
            <person name="Sanchez-Ferrero J.C."/>
            <person name="Saunders D."/>
            <person name="Seeger K."/>
            <person name="Squares R."/>
            <person name="Squares S."/>
            <person name="Takeuchi M."/>
            <person name="Tekaia F."/>
            <person name="Turner G."/>
            <person name="Vazquez de Aldana C.R."/>
            <person name="Weidman J."/>
            <person name="White O."/>
            <person name="Woodward J.R."/>
            <person name="Yu J.-H."/>
            <person name="Fraser C.M."/>
            <person name="Galagan J.E."/>
            <person name="Asai K."/>
            <person name="Machida M."/>
            <person name="Hall N."/>
            <person name="Barrell B.G."/>
            <person name="Denning D.W."/>
        </authorList>
    </citation>
    <scope>NUCLEOTIDE SEQUENCE [LARGE SCALE GENOMIC DNA]</scope>
    <source>
        <strain>ATCC MYA-4609 / CBS 101355 / FGSC A1100 / Af293</strain>
    </source>
</reference>
<keyword id="KW-0119">Carbohydrate metabolism</keyword>
<keyword id="KW-0520">NAD</keyword>
<keyword id="KW-0521">NADP</keyword>
<keyword id="KW-0560">Oxidoreductase</keyword>
<keyword id="KW-1185">Reference proteome</keyword>
<keyword id="KW-0859">Xylose metabolism</keyword>
<gene>
    <name type="primary">xyl1</name>
    <name type="ORF">AFUA_1G04820</name>
</gene>
<dbReference type="EC" id="1.1.1.307"/>
<dbReference type="EMBL" id="AAHF01000007">
    <property type="protein sequence ID" value="EAL88193.1"/>
    <property type="molecule type" value="Genomic_DNA"/>
</dbReference>
<dbReference type="RefSeq" id="XP_750231.1">
    <property type="nucleotide sequence ID" value="XM_745138.1"/>
</dbReference>
<dbReference type="SMR" id="Q4WJT9"/>
<dbReference type="FunCoup" id="Q4WJT9">
    <property type="interactions" value="410"/>
</dbReference>
<dbReference type="STRING" id="330879.Q4WJT9"/>
<dbReference type="EnsemblFungi" id="EAL88193">
    <property type="protein sequence ID" value="EAL88193"/>
    <property type="gene ID" value="AFUA_1G04820"/>
</dbReference>
<dbReference type="GeneID" id="3507406"/>
<dbReference type="KEGG" id="afm:AFUA_1G04820"/>
<dbReference type="eggNOG" id="KOG1577">
    <property type="taxonomic scope" value="Eukaryota"/>
</dbReference>
<dbReference type="HOGENOM" id="CLU_023205_0_0_1"/>
<dbReference type="InParanoid" id="Q4WJT9"/>
<dbReference type="OMA" id="VHWPSEG"/>
<dbReference type="OrthoDB" id="416253at2759"/>
<dbReference type="UniPathway" id="UPA00810"/>
<dbReference type="Proteomes" id="UP000002530">
    <property type="component" value="Chromosome 1"/>
</dbReference>
<dbReference type="GO" id="GO:0005829">
    <property type="term" value="C:cytosol"/>
    <property type="evidence" value="ECO:0000318"/>
    <property type="project" value="GO_Central"/>
</dbReference>
<dbReference type="GO" id="GO:0004032">
    <property type="term" value="F:aldose reductase (NADPH) activity"/>
    <property type="evidence" value="ECO:0000318"/>
    <property type="project" value="GO_Central"/>
</dbReference>
<dbReference type="GO" id="GO:0032866">
    <property type="term" value="F:D-xylose reductase (NADPH) activity"/>
    <property type="evidence" value="ECO:0007669"/>
    <property type="project" value="InterPro"/>
</dbReference>
<dbReference type="GO" id="GO:0042843">
    <property type="term" value="P:D-xylose catabolic process"/>
    <property type="evidence" value="ECO:0007669"/>
    <property type="project" value="UniProtKB-UniPathway"/>
</dbReference>
<dbReference type="CDD" id="cd19115">
    <property type="entry name" value="AKR_AKR2D1"/>
    <property type="match status" value="1"/>
</dbReference>
<dbReference type="FunFam" id="3.20.20.100:FF:000007">
    <property type="entry name" value="NAD(P)H-dependent D-xylose reductase xyl1"/>
    <property type="match status" value="1"/>
</dbReference>
<dbReference type="Gene3D" id="3.20.20.100">
    <property type="entry name" value="NADP-dependent oxidoreductase domain"/>
    <property type="match status" value="1"/>
</dbReference>
<dbReference type="InterPro" id="IPR020471">
    <property type="entry name" value="AKR"/>
</dbReference>
<dbReference type="InterPro" id="IPR044487">
    <property type="entry name" value="AKR2D"/>
</dbReference>
<dbReference type="InterPro" id="IPR018170">
    <property type="entry name" value="Aldo/ket_reductase_CS"/>
</dbReference>
<dbReference type="InterPro" id="IPR023210">
    <property type="entry name" value="NADP_OxRdtase_dom"/>
</dbReference>
<dbReference type="InterPro" id="IPR036812">
    <property type="entry name" value="NADP_OxRdtase_dom_sf"/>
</dbReference>
<dbReference type="PANTHER" id="PTHR11732">
    <property type="entry name" value="ALDO/KETO REDUCTASE"/>
    <property type="match status" value="1"/>
</dbReference>
<dbReference type="Pfam" id="PF00248">
    <property type="entry name" value="Aldo_ket_red"/>
    <property type="match status" value="1"/>
</dbReference>
<dbReference type="PIRSF" id="PIRSF000097">
    <property type="entry name" value="AKR"/>
    <property type="match status" value="1"/>
</dbReference>
<dbReference type="PRINTS" id="PR00069">
    <property type="entry name" value="ALDKETRDTASE"/>
</dbReference>
<dbReference type="SUPFAM" id="SSF51430">
    <property type="entry name" value="NAD(P)-linked oxidoreductase"/>
    <property type="match status" value="1"/>
</dbReference>
<dbReference type="PROSITE" id="PS00798">
    <property type="entry name" value="ALDOKETO_REDUCTASE_1"/>
    <property type="match status" value="1"/>
</dbReference>
<dbReference type="PROSITE" id="PS00062">
    <property type="entry name" value="ALDOKETO_REDUCTASE_2"/>
    <property type="match status" value="1"/>
</dbReference>
<dbReference type="PROSITE" id="PS00063">
    <property type="entry name" value="ALDOKETO_REDUCTASE_3"/>
    <property type="match status" value="1"/>
</dbReference>
<protein>
    <recommendedName>
        <fullName>Probable NAD(P)H-dependent D-xylose reductase xyl1</fullName>
        <shortName>XR</shortName>
        <ecNumber>1.1.1.307</ecNumber>
    </recommendedName>
</protein>
<feature type="chain" id="PRO_0000393499" description="Probable NAD(P)H-dependent D-xylose reductase xyl1">
    <location>
        <begin position="1"/>
        <end position="315"/>
    </location>
</feature>
<feature type="active site" description="Proton donor" evidence="1">
    <location>
        <position position="50"/>
    </location>
</feature>
<feature type="binding site" evidence="1">
    <location>
        <position position="112"/>
    </location>
    <ligand>
        <name>substrate</name>
    </ligand>
</feature>
<feature type="binding site" evidence="1">
    <location>
        <begin position="166"/>
        <end position="167"/>
    </location>
    <ligand>
        <name>NAD(+)</name>
        <dbReference type="ChEBI" id="CHEBI:57540"/>
    </ligand>
</feature>
<feature type="binding site" evidence="1">
    <location>
        <begin position="215"/>
        <end position="224"/>
    </location>
    <ligand>
        <name>NAD(+)</name>
        <dbReference type="ChEBI" id="CHEBI:57540"/>
    </ligand>
</feature>
<feature type="binding site" evidence="1">
    <location>
        <begin position="271"/>
        <end position="281"/>
    </location>
    <ligand>
        <name>NAD(+)</name>
        <dbReference type="ChEBI" id="CHEBI:57540"/>
    </ligand>
</feature>
<feature type="site" description="Lowers pKa of active site Tyr" evidence="1">
    <location>
        <position position="79"/>
    </location>
</feature>
<comment type="function">
    <text evidence="1">Catalyzes the initial reaction in the xylose utilization pathway by reducing D-xylose into xylitol. Xylose is a major component of hemicelluloses such as xylan. Most fungi utilize D-xylose via three enzymatic reactions, xylose reductase (XR), xylitol dehydrogenase (XDH), and xylulokinase, to form xylulose 5-phosphate, which enters pentose phosphate pathway (By similarity).</text>
</comment>
<comment type="catalytic activity">
    <reaction>
        <text>xylitol + NAD(+) = D-xylose + NADH + H(+)</text>
        <dbReference type="Rhea" id="RHEA:27441"/>
        <dbReference type="ChEBI" id="CHEBI:15378"/>
        <dbReference type="ChEBI" id="CHEBI:17151"/>
        <dbReference type="ChEBI" id="CHEBI:53455"/>
        <dbReference type="ChEBI" id="CHEBI:57540"/>
        <dbReference type="ChEBI" id="CHEBI:57945"/>
        <dbReference type="EC" id="1.1.1.307"/>
    </reaction>
</comment>
<comment type="catalytic activity">
    <reaction>
        <text>xylitol + NADP(+) = D-xylose + NADPH + H(+)</text>
        <dbReference type="Rhea" id="RHEA:27445"/>
        <dbReference type="ChEBI" id="CHEBI:15378"/>
        <dbReference type="ChEBI" id="CHEBI:17151"/>
        <dbReference type="ChEBI" id="CHEBI:53455"/>
        <dbReference type="ChEBI" id="CHEBI:57783"/>
        <dbReference type="ChEBI" id="CHEBI:58349"/>
        <dbReference type="EC" id="1.1.1.307"/>
    </reaction>
</comment>
<comment type="pathway">
    <text>Carbohydrate metabolism; D-xylose degradation.</text>
</comment>
<comment type="similarity">
    <text evidence="2">Belongs to the aldo/keto reductase family.</text>
</comment>
<sequence length="315" mass="35544">MTTPSIKLNSGYDMPLVGFGLWKVNKETCADQIYHAIKAGYRLFDGACDYGNEVEAGKGVARAIQEGIVKREELFIVSKLWNSFHDGDRVEPICRKQLADWGLDYFDLFIVHFPIALKYVDPAVRYPPGWLSENNKLEFSNASIQETWTAMESLVDKKLARSIGVSNFSAQLLMDLLRYARIRPATLQIEHHPYLTQERLVTYAQKEGIAVTAYSSFGPLSFVELDLKDAHETPKLFDHDVIKGIAQKHGRTPAQVLLRWATQRNIAVIPKSNDPTRLAQNLDVTGWDLEASEIEAISALNRNLRFNDPLAIPVV</sequence>
<proteinExistence type="inferred from homology"/>
<name>XYL1_ASPFU</name>